<sequence>MDVLVPLLQLLVLLLTLPLHLLALLGCWQPICKTYFPYLMATLTARSYKKMESKKRELFSQIKDLKGTSNEVTLLELGCGTGANFQFYPPGCKVTCVDPNPNFEKFLTKSMAENRHLQYERFIVAYGENMKQLADSSMDVVVCTLVLCSVQSPRKVLQEVQRVLKPGGLLFFWEHVSEPQGSQALLWQRVLEPTWKHIGDGCHLTRETWKDIEKAQFSEVQLEWQPPPFKWLPVGPHIMGKAVK</sequence>
<comment type="function">
    <text evidence="1">Thiol S-methyltransferase that catalyzes the transfer of a methyl group from S-adenosyl-L-methionine to alkyl and phenolic thiol-containing acceptor substrates. Together with TMT1B accounts for most of S-thiol methylation activity in the endoplasmic reticulum of hepatocytes. Selectively methylates S-centered nucleophiles from metabolites such as hydrogen sulfide and dithiothreitol.</text>
</comment>
<comment type="catalytic activity">
    <reaction evidence="1">
        <text>a thiol + S-adenosyl-L-methionine = a methyl thioether + S-adenosyl-L-homocysteine + H(+)</text>
        <dbReference type="Rhea" id="RHEA:18277"/>
        <dbReference type="ChEBI" id="CHEBI:15378"/>
        <dbReference type="ChEBI" id="CHEBI:29256"/>
        <dbReference type="ChEBI" id="CHEBI:57856"/>
        <dbReference type="ChEBI" id="CHEBI:59789"/>
        <dbReference type="ChEBI" id="CHEBI:86315"/>
        <dbReference type="EC" id="2.1.1.9"/>
    </reaction>
    <physiologicalReaction direction="left-to-right" evidence="1">
        <dbReference type="Rhea" id="RHEA:18278"/>
    </physiologicalReaction>
</comment>
<comment type="subcellular location">
    <subcellularLocation>
        <location evidence="3">Endoplasmic reticulum membrane</location>
        <topology evidence="3">Peripheral membrane protein</topology>
    </subcellularLocation>
    <subcellularLocation>
        <location evidence="3">Lipid droplet</location>
    </subcellularLocation>
    <subcellularLocation>
        <location evidence="1">Microsome</location>
    </subcellularLocation>
    <subcellularLocation>
        <location evidence="1">Cytoplasm</location>
        <location evidence="1">Cytosol</location>
    </subcellularLocation>
    <text>Highly concentrated in the perinuclear area of the endoplasmic reticulum (ER) and surrounding lipid droplets. May be associated with the specific regions of the LR that form lipid droplets and targeted to the initial deposits of lipids where the lipid droplets form.</text>
</comment>
<comment type="tissue specificity">
    <text evidence="3">Highly expressed in liver and kidney. No expression in testis, heart, lung, brain, spleen or cultured fibroblasts.</text>
</comment>
<comment type="similarity">
    <text evidence="4">Belongs to the methyltransferase superfamily.</text>
</comment>
<protein>
    <recommendedName>
        <fullName>Thiol S-methyltransferase TMT1B</fullName>
        <ecNumber evidence="1">2.1.1.9</ecNumber>
    </recommendedName>
    <alternativeName>
        <fullName>Associated with lipid droplet protein 1</fullName>
        <shortName>ALDI</shortName>
    </alternativeName>
    <alternativeName>
        <fullName>Methyltransferase-like protein 7B</fullName>
    </alternativeName>
    <alternativeName>
        <fullName>Thiol S-methyltransferase METTL7B</fullName>
    </alternativeName>
</protein>
<dbReference type="EC" id="2.1.1.9" evidence="1"/>
<dbReference type="EMBL" id="BC092587">
    <property type="protein sequence ID" value="AAH92587.1"/>
    <property type="molecule type" value="mRNA"/>
</dbReference>
<dbReference type="EMBL" id="BC092590">
    <property type="protein sequence ID" value="AAH92590.1"/>
    <property type="molecule type" value="mRNA"/>
</dbReference>
<dbReference type="RefSeq" id="NP_001019447.1">
    <property type="nucleotide sequence ID" value="NM_001024276.1"/>
</dbReference>
<dbReference type="SMR" id="Q562C4"/>
<dbReference type="FunCoup" id="Q562C4">
    <property type="interactions" value="56"/>
</dbReference>
<dbReference type="STRING" id="10116.ENSRNOP00000010760"/>
<dbReference type="iPTMnet" id="Q562C4"/>
<dbReference type="PhosphoSitePlus" id="Q562C4"/>
<dbReference type="PaxDb" id="10116-ENSRNOP00000010760"/>
<dbReference type="Ensembl" id="ENSRNOT00000010760.5">
    <property type="protein sequence ID" value="ENSRNOP00000010760.4"/>
    <property type="gene ID" value="ENSRNOG00000007927.5"/>
</dbReference>
<dbReference type="GeneID" id="366792"/>
<dbReference type="KEGG" id="rno:366792"/>
<dbReference type="UCSC" id="RGD:1305205">
    <property type="organism name" value="rat"/>
</dbReference>
<dbReference type="AGR" id="RGD:1305205"/>
<dbReference type="CTD" id="196410"/>
<dbReference type="RGD" id="1305205">
    <property type="gene designation" value="Tmt1b"/>
</dbReference>
<dbReference type="eggNOG" id="KOG4300">
    <property type="taxonomic scope" value="Eukaryota"/>
</dbReference>
<dbReference type="GeneTree" id="ENSGT00940000162340"/>
<dbReference type="HOGENOM" id="CLU_037990_7_2_1"/>
<dbReference type="InParanoid" id="Q562C4"/>
<dbReference type="OMA" id="PPPIKWL"/>
<dbReference type="OrthoDB" id="416496at2759"/>
<dbReference type="PhylomeDB" id="Q562C4"/>
<dbReference type="TreeFam" id="TF331790"/>
<dbReference type="PRO" id="PR:Q562C4"/>
<dbReference type="Proteomes" id="UP000002494">
    <property type="component" value="Chromosome 7"/>
</dbReference>
<dbReference type="Bgee" id="ENSRNOG00000007927">
    <property type="expression patterns" value="Expressed in liver and 15 other cell types or tissues"/>
</dbReference>
<dbReference type="GO" id="GO:0005829">
    <property type="term" value="C:cytosol"/>
    <property type="evidence" value="ECO:0007669"/>
    <property type="project" value="UniProtKB-SubCell"/>
</dbReference>
<dbReference type="GO" id="GO:0005789">
    <property type="term" value="C:endoplasmic reticulum membrane"/>
    <property type="evidence" value="ECO:0007669"/>
    <property type="project" value="UniProtKB-SubCell"/>
</dbReference>
<dbReference type="GO" id="GO:0005811">
    <property type="term" value="C:lipid droplet"/>
    <property type="evidence" value="ECO:0007669"/>
    <property type="project" value="UniProtKB-SubCell"/>
</dbReference>
<dbReference type="GO" id="GO:0008757">
    <property type="term" value="F:S-adenosylmethionine-dependent methyltransferase activity"/>
    <property type="evidence" value="ECO:0000250"/>
    <property type="project" value="UniProtKB"/>
</dbReference>
<dbReference type="GO" id="GO:0018708">
    <property type="term" value="F:thiol S-methyltransferase activity"/>
    <property type="evidence" value="ECO:0000250"/>
    <property type="project" value="UniProtKB"/>
</dbReference>
<dbReference type="GO" id="GO:0032259">
    <property type="term" value="P:methylation"/>
    <property type="evidence" value="ECO:0007669"/>
    <property type="project" value="UniProtKB-KW"/>
</dbReference>
<dbReference type="CDD" id="cd02440">
    <property type="entry name" value="AdoMet_MTases"/>
    <property type="match status" value="1"/>
</dbReference>
<dbReference type="Gene3D" id="3.40.50.150">
    <property type="entry name" value="Vaccinia Virus protein VP39"/>
    <property type="match status" value="1"/>
</dbReference>
<dbReference type="InterPro" id="IPR013216">
    <property type="entry name" value="Methyltransf_11"/>
</dbReference>
<dbReference type="InterPro" id="IPR029063">
    <property type="entry name" value="SAM-dependent_MTases_sf"/>
</dbReference>
<dbReference type="InterPro" id="IPR052356">
    <property type="entry name" value="Thiol_S-MT"/>
</dbReference>
<dbReference type="PANTHER" id="PTHR45036">
    <property type="entry name" value="METHYLTRANSFERASE LIKE 7B"/>
    <property type="match status" value="1"/>
</dbReference>
<dbReference type="PANTHER" id="PTHR45036:SF6">
    <property type="entry name" value="THIOL S-METHYLTRANSFERASE TMT1B"/>
    <property type="match status" value="1"/>
</dbReference>
<dbReference type="Pfam" id="PF08241">
    <property type="entry name" value="Methyltransf_11"/>
    <property type="match status" value="1"/>
</dbReference>
<dbReference type="SUPFAM" id="SSF53335">
    <property type="entry name" value="S-adenosyl-L-methionine-dependent methyltransferases"/>
    <property type="match status" value="1"/>
</dbReference>
<proteinExistence type="evidence at protein level"/>
<reference key="1">
    <citation type="journal article" date="2004" name="Genome Res.">
        <title>The status, quality, and expansion of the NIH full-length cDNA project: the Mammalian Gene Collection (MGC).</title>
        <authorList>
            <consortium name="The MGC Project Team"/>
        </authorList>
    </citation>
    <scope>NUCLEOTIDE SEQUENCE [LARGE SCALE MRNA]</scope>
    <source>
        <tissue>Liver</tissue>
        <tissue>Spleen</tissue>
    </source>
</reference>
<reference key="2">
    <citation type="journal article" date="2006" name="Traffic">
        <title>Identification and characterization of associated with lipid droplet protein 1: a novel membrane-associated protein that resides on hepatic lipid droplets.</title>
        <authorList>
            <person name="Turro S."/>
            <person name="Ingelmo-Torres M."/>
            <person name="Estanyol J.M."/>
            <person name="Tebar F."/>
            <person name="Fernandez M.A."/>
            <person name="Albor C.V."/>
            <person name="Gaus K."/>
            <person name="Grewal T."/>
            <person name="Enrich C."/>
            <person name="Pol A."/>
        </authorList>
    </citation>
    <scope>PROTEIN SEQUENCE OF 33-46; 56-63; 93-105; 115-131; 154-162; 189-206 AND 214-241</scope>
    <scope>SUBCELLULAR LOCATION</scope>
    <scope>TISSUE SPECIFICITY</scope>
    <source>
        <strain>Sprague-Dawley</strain>
        <tissue>Liver</tissue>
    </source>
</reference>
<reference key="3">
    <citation type="journal article" date="2021" name="Sci. Rep.">
        <title>Human METTL7B is an alkyl thiol methyltransferase that metabolizes hydrogen sulfide and captopril.</title>
        <authorList>
            <person name="Maldonato B.J."/>
            <person name="Russell D.A."/>
            <person name="Totah R.A."/>
        </authorList>
    </citation>
    <scope>IDENTIFICATION BY MASS SPECTROMETRY</scope>
</reference>
<organism>
    <name type="scientific">Rattus norvegicus</name>
    <name type="common">Rat</name>
    <dbReference type="NCBI Taxonomy" id="10116"/>
    <lineage>
        <taxon>Eukaryota</taxon>
        <taxon>Metazoa</taxon>
        <taxon>Chordata</taxon>
        <taxon>Craniata</taxon>
        <taxon>Vertebrata</taxon>
        <taxon>Euteleostomi</taxon>
        <taxon>Mammalia</taxon>
        <taxon>Eutheria</taxon>
        <taxon>Euarchontoglires</taxon>
        <taxon>Glires</taxon>
        <taxon>Rodentia</taxon>
        <taxon>Myomorpha</taxon>
        <taxon>Muroidea</taxon>
        <taxon>Muridae</taxon>
        <taxon>Murinae</taxon>
        <taxon>Rattus</taxon>
    </lineage>
</organism>
<name>TMT1B_RAT</name>
<keyword id="KW-0963">Cytoplasm</keyword>
<keyword id="KW-0903">Direct protein sequencing</keyword>
<keyword id="KW-0256">Endoplasmic reticulum</keyword>
<keyword id="KW-0551">Lipid droplet</keyword>
<keyword id="KW-0472">Membrane</keyword>
<keyword id="KW-0489">Methyltransferase</keyword>
<keyword id="KW-0492">Microsome</keyword>
<keyword id="KW-1185">Reference proteome</keyword>
<keyword id="KW-0732">Signal</keyword>
<keyword id="KW-0808">Transferase</keyword>
<gene>
    <name type="primary">Tmt1b</name>
    <name evidence="5" type="synonym">Mettl7b</name>
</gene>
<accession>Q562C4</accession>
<evidence type="ECO:0000250" key="1">
    <source>
        <dbReference type="UniProtKB" id="Q6UX53"/>
    </source>
</evidence>
<evidence type="ECO:0000255" key="2"/>
<evidence type="ECO:0000269" key="3">
    <source>
    </source>
</evidence>
<evidence type="ECO:0000305" key="4"/>
<evidence type="ECO:0000312" key="5">
    <source>
        <dbReference type="RGD" id="1305205"/>
    </source>
</evidence>
<feature type="signal peptide" evidence="2">
    <location>
        <begin position="1"/>
        <end position="23"/>
    </location>
</feature>
<feature type="chain" id="PRO_0000251924" description="Thiol S-methyltransferase TMT1B">
    <location>
        <begin position="24"/>
        <end position="244"/>
    </location>
</feature>
<feature type="sequence conflict" description="In Ref. 2; AA sequence." evidence="4" ref="2">
    <original>L</original>
    <variation>F</variation>
    <location>
        <position position="39"/>
    </location>
</feature>
<feature type="sequence conflict" description="In Ref. 2; AA sequence." evidence="4" ref="2">
    <original>T</original>
    <variation>M</variation>
    <location>
        <position position="42"/>
    </location>
</feature>
<feature type="sequence conflict" description="In Ref. 2; AA sequence." evidence="4" ref="2">
    <original>K</original>
    <variation>R</variation>
    <location>
        <position position="230"/>
    </location>
</feature>